<reference key="1">
    <citation type="submission" date="2009-01" db="EMBL/GenBank/DDBJ databases">
        <title>Complete sequence of Geobacter sp. FRC-32.</title>
        <authorList>
            <consortium name="US DOE Joint Genome Institute"/>
            <person name="Lucas S."/>
            <person name="Copeland A."/>
            <person name="Lapidus A."/>
            <person name="Glavina del Rio T."/>
            <person name="Dalin E."/>
            <person name="Tice H."/>
            <person name="Bruce D."/>
            <person name="Goodwin L."/>
            <person name="Pitluck S."/>
            <person name="Saunders E."/>
            <person name="Brettin T."/>
            <person name="Detter J.C."/>
            <person name="Han C."/>
            <person name="Larimer F."/>
            <person name="Land M."/>
            <person name="Hauser L."/>
            <person name="Kyrpides N."/>
            <person name="Ovchinnikova G."/>
            <person name="Kostka J."/>
            <person name="Richardson P."/>
        </authorList>
    </citation>
    <scope>NUCLEOTIDE SEQUENCE [LARGE SCALE GENOMIC DNA]</scope>
    <source>
        <strain>DSM 22248 / JCM 15807 / FRC-32</strain>
    </source>
</reference>
<comment type="function">
    <text evidence="1">Catalyzes the reversible formation of acyl-phosphate (acyl-PO(4)) from acyl-[acyl-carrier-protein] (acyl-ACP). This enzyme utilizes acyl-ACP as fatty acyl donor, but not acyl-CoA.</text>
</comment>
<comment type="catalytic activity">
    <reaction evidence="1">
        <text>a fatty acyl-[ACP] + phosphate = an acyl phosphate + holo-[ACP]</text>
        <dbReference type="Rhea" id="RHEA:42292"/>
        <dbReference type="Rhea" id="RHEA-COMP:9685"/>
        <dbReference type="Rhea" id="RHEA-COMP:14125"/>
        <dbReference type="ChEBI" id="CHEBI:43474"/>
        <dbReference type="ChEBI" id="CHEBI:59918"/>
        <dbReference type="ChEBI" id="CHEBI:64479"/>
        <dbReference type="ChEBI" id="CHEBI:138651"/>
        <dbReference type="EC" id="2.3.1.274"/>
    </reaction>
</comment>
<comment type="pathway">
    <text evidence="1">Lipid metabolism; phospholipid metabolism.</text>
</comment>
<comment type="subunit">
    <text evidence="1">Homodimer. Probably interacts with PlsY.</text>
</comment>
<comment type="subcellular location">
    <subcellularLocation>
        <location evidence="1">Cytoplasm</location>
    </subcellularLocation>
    <text evidence="1">Associated with the membrane possibly through PlsY.</text>
</comment>
<comment type="similarity">
    <text evidence="1">Belongs to the PlsX family.</text>
</comment>
<proteinExistence type="inferred from homology"/>
<name>PLSX_GEODF</name>
<sequence>MRVAVDAMGGDNAPGVEVEGAVAAAREFGIAITLVGDTEKVNCELAKHNCKDLDITVKHASEVVGMHDSASDAVRKKKDSSIRIAFELVKNNEADAVVSAGNSGATMAAGMFVLKRIKGIDRPAIAQIFPTLRGKTLVLDVGGNVDCKPLNLVQFAIMGEVYARSVMDVENPKIGVLSNGEEESKGNDLTRESSTLLKSTSLDYMGYVEGRDIFNGMVDVVVCDGFVGNVVLKLSEGLAEAVSTMLKEEIKQSLLYKIGYILSRRAFINFKKKVDYTEYGGAPLLGIDGVGMICHGGSNAKAIKNAIRFAHEYARKGVNQHMVEKLQENYPLYMQQLETLKAQAAG</sequence>
<dbReference type="EC" id="2.3.1.274" evidence="1"/>
<dbReference type="EMBL" id="CP001390">
    <property type="protein sequence ID" value="ACM20961.1"/>
    <property type="molecule type" value="Genomic_DNA"/>
</dbReference>
<dbReference type="RefSeq" id="WP_012647690.1">
    <property type="nucleotide sequence ID" value="NC_011979.1"/>
</dbReference>
<dbReference type="SMR" id="B9M0V8"/>
<dbReference type="STRING" id="316067.Geob_2611"/>
<dbReference type="KEGG" id="geo:Geob_2611"/>
<dbReference type="eggNOG" id="COG0416">
    <property type="taxonomic scope" value="Bacteria"/>
</dbReference>
<dbReference type="HOGENOM" id="CLU_039379_1_1_7"/>
<dbReference type="OrthoDB" id="9806408at2"/>
<dbReference type="UniPathway" id="UPA00085"/>
<dbReference type="Proteomes" id="UP000007721">
    <property type="component" value="Chromosome"/>
</dbReference>
<dbReference type="GO" id="GO:0005737">
    <property type="term" value="C:cytoplasm"/>
    <property type="evidence" value="ECO:0007669"/>
    <property type="project" value="UniProtKB-SubCell"/>
</dbReference>
<dbReference type="GO" id="GO:0043811">
    <property type="term" value="F:phosphate:acyl-[acyl carrier protein] acyltransferase activity"/>
    <property type="evidence" value="ECO:0007669"/>
    <property type="project" value="UniProtKB-UniRule"/>
</dbReference>
<dbReference type="GO" id="GO:0006633">
    <property type="term" value="P:fatty acid biosynthetic process"/>
    <property type="evidence" value="ECO:0007669"/>
    <property type="project" value="UniProtKB-UniRule"/>
</dbReference>
<dbReference type="GO" id="GO:0008654">
    <property type="term" value="P:phospholipid biosynthetic process"/>
    <property type="evidence" value="ECO:0007669"/>
    <property type="project" value="UniProtKB-KW"/>
</dbReference>
<dbReference type="Gene3D" id="3.40.718.10">
    <property type="entry name" value="Isopropylmalate Dehydrogenase"/>
    <property type="match status" value="1"/>
</dbReference>
<dbReference type="HAMAP" id="MF_00019">
    <property type="entry name" value="PlsX"/>
    <property type="match status" value="1"/>
</dbReference>
<dbReference type="InterPro" id="IPR003664">
    <property type="entry name" value="FA_synthesis"/>
</dbReference>
<dbReference type="InterPro" id="IPR012281">
    <property type="entry name" value="Phospholipid_synth_PlsX-like"/>
</dbReference>
<dbReference type="NCBIfam" id="TIGR00182">
    <property type="entry name" value="plsX"/>
    <property type="match status" value="1"/>
</dbReference>
<dbReference type="PANTHER" id="PTHR30100">
    <property type="entry name" value="FATTY ACID/PHOSPHOLIPID SYNTHESIS PROTEIN PLSX"/>
    <property type="match status" value="1"/>
</dbReference>
<dbReference type="PANTHER" id="PTHR30100:SF1">
    <property type="entry name" value="PHOSPHATE ACYLTRANSFERASE"/>
    <property type="match status" value="1"/>
</dbReference>
<dbReference type="Pfam" id="PF02504">
    <property type="entry name" value="FA_synthesis"/>
    <property type="match status" value="1"/>
</dbReference>
<dbReference type="PIRSF" id="PIRSF002465">
    <property type="entry name" value="Phsphlp_syn_PlsX"/>
    <property type="match status" value="1"/>
</dbReference>
<dbReference type="SUPFAM" id="SSF53659">
    <property type="entry name" value="Isocitrate/Isopropylmalate dehydrogenase-like"/>
    <property type="match status" value="1"/>
</dbReference>
<feature type="chain" id="PRO_1000193136" description="Phosphate acyltransferase">
    <location>
        <begin position="1"/>
        <end position="346"/>
    </location>
</feature>
<evidence type="ECO:0000255" key="1">
    <source>
        <dbReference type="HAMAP-Rule" id="MF_00019"/>
    </source>
</evidence>
<organism>
    <name type="scientific">Geotalea daltonii (strain DSM 22248 / JCM 15807 / FRC-32)</name>
    <name type="common">Geobacter daltonii</name>
    <dbReference type="NCBI Taxonomy" id="316067"/>
    <lineage>
        <taxon>Bacteria</taxon>
        <taxon>Pseudomonadati</taxon>
        <taxon>Thermodesulfobacteriota</taxon>
        <taxon>Desulfuromonadia</taxon>
        <taxon>Geobacterales</taxon>
        <taxon>Geobacteraceae</taxon>
        <taxon>Geotalea</taxon>
    </lineage>
</organism>
<accession>B9M0V8</accession>
<gene>
    <name evidence="1" type="primary">plsX</name>
    <name type="ordered locus">Geob_2611</name>
</gene>
<keyword id="KW-0963">Cytoplasm</keyword>
<keyword id="KW-0444">Lipid biosynthesis</keyword>
<keyword id="KW-0443">Lipid metabolism</keyword>
<keyword id="KW-0594">Phospholipid biosynthesis</keyword>
<keyword id="KW-1208">Phospholipid metabolism</keyword>
<keyword id="KW-1185">Reference proteome</keyword>
<keyword id="KW-0808">Transferase</keyword>
<protein>
    <recommendedName>
        <fullName evidence="1">Phosphate acyltransferase</fullName>
        <ecNumber evidence="1">2.3.1.274</ecNumber>
    </recommendedName>
    <alternativeName>
        <fullName evidence="1">Acyl-ACP phosphotransacylase</fullName>
    </alternativeName>
    <alternativeName>
        <fullName evidence="1">Acyl-[acyl-carrier-protein]--phosphate acyltransferase</fullName>
    </alternativeName>
    <alternativeName>
        <fullName evidence="1">Phosphate-acyl-ACP acyltransferase</fullName>
    </alternativeName>
</protein>